<accession>Q5D0X0</accession>
<proteinExistence type="evidence at transcript level"/>
<keyword id="KW-0325">Glycoprotein</keyword>
<keyword id="KW-0339">Growth factor</keyword>
<keyword id="KW-0358">Heparin-binding</keyword>
<keyword id="KW-0497">Mitogen</keyword>
<keyword id="KW-0964">Secreted</keyword>
<keyword id="KW-0732">Signal</keyword>
<reference key="1">
    <citation type="submission" date="2005-02" db="EMBL/GenBank/DDBJ databases">
        <authorList>
            <person name="Zheng D."/>
            <person name="Liu X.D."/>
            <person name="Zheng W.J."/>
        </authorList>
    </citation>
    <scope>NUCLEOTIDE SEQUENCE [MRNA]</scope>
</reference>
<name>FGF7_CEREL</name>
<sequence>MRKWILTWILPSLLYRSCFHIICLVGTISLACNDMTPEQMATNVNCSSPERHTRSYDYMEGGDIRVRRLFCRTQWYLRIDKRGKVKGTQEMKNNYNIMEIRTVAVGIVAIKGVESEYYLAMNKEGKLYAKKECNEDCNFKELILENHYNTYASAKWTHSGGEMFVALNQKGVPVRGKKTKKEQKTAHFLPMAIT</sequence>
<dbReference type="EMBL" id="AY923858">
    <property type="protein sequence ID" value="AAX19003.1"/>
    <property type="molecule type" value="mRNA"/>
</dbReference>
<dbReference type="RefSeq" id="XP_043776864.1">
    <property type="nucleotide sequence ID" value="XM_043920929.1"/>
</dbReference>
<dbReference type="SMR" id="Q5D0X0"/>
<dbReference type="GlyCosmos" id="Q5D0X0">
    <property type="glycosylation" value="1 site, No reported glycans"/>
</dbReference>
<dbReference type="GeneID" id="122705509"/>
<dbReference type="GO" id="GO:0005576">
    <property type="term" value="C:extracellular region"/>
    <property type="evidence" value="ECO:0007669"/>
    <property type="project" value="UniProtKB-SubCell"/>
</dbReference>
<dbReference type="GO" id="GO:0008083">
    <property type="term" value="F:growth factor activity"/>
    <property type="evidence" value="ECO:0007669"/>
    <property type="project" value="UniProtKB-KW"/>
</dbReference>
<dbReference type="GO" id="GO:0008201">
    <property type="term" value="F:heparin binding"/>
    <property type="evidence" value="ECO:0007669"/>
    <property type="project" value="UniProtKB-KW"/>
</dbReference>
<dbReference type="GO" id="GO:0051781">
    <property type="term" value="P:positive regulation of cell division"/>
    <property type="evidence" value="ECO:0007669"/>
    <property type="project" value="UniProtKB-KW"/>
</dbReference>
<dbReference type="CDD" id="cd23319">
    <property type="entry name" value="beta-trefoil_FGF7"/>
    <property type="match status" value="1"/>
</dbReference>
<dbReference type="FunFam" id="2.80.10.50:FF:000004">
    <property type="entry name" value="Fibroblast growth factor"/>
    <property type="match status" value="1"/>
</dbReference>
<dbReference type="Gene3D" id="2.80.10.50">
    <property type="match status" value="1"/>
</dbReference>
<dbReference type="InterPro" id="IPR002209">
    <property type="entry name" value="Fibroblast_GF_fam"/>
</dbReference>
<dbReference type="InterPro" id="IPR008996">
    <property type="entry name" value="IL1/FGF"/>
</dbReference>
<dbReference type="PANTHER" id="PTHR11486">
    <property type="entry name" value="FIBROBLAST GROWTH FACTOR"/>
    <property type="match status" value="1"/>
</dbReference>
<dbReference type="Pfam" id="PF00167">
    <property type="entry name" value="FGF"/>
    <property type="match status" value="1"/>
</dbReference>
<dbReference type="PRINTS" id="PR00263">
    <property type="entry name" value="HBGFFGF"/>
</dbReference>
<dbReference type="PRINTS" id="PR00262">
    <property type="entry name" value="IL1HBGF"/>
</dbReference>
<dbReference type="SMART" id="SM00442">
    <property type="entry name" value="FGF"/>
    <property type="match status" value="1"/>
</dbReference>
<dbReference type="SUPFAM" id="SSF50353">
    <property type="entry name" value="Cytokine"/>
    <property type="match status" value="1"/>
</dbReference>
<dbReference type="PROSITE" id="PS00247">
    <property type="entry name" value="HBGF_FGF"/>
    <property type="match status" value="1"/>
</dbReference>
<organism>
    <name type="scientific">Cervus elaphus</name>
    <name type="common">Red deer</name>
    <dbReference type="NCBI Taxonomy" id="9860"/>
    <lineage>
        <taxon>Eukaryota</taxon>
        <taxon>Metazoa</taxon>
        <taxon>Chordata</taxon>
        <taxon>Craniata</taxon>
        <taxon>Vertebrata</taxon>
        <taxon>Euteleostomi</taxon>
        <taxon>Mammalia</taxon>
        <taxon>Eutheria</taxon>
        <taxon>Laurasiatheria</taxon>
        <taxon>Artiodactyla</taxon>
        <taxon>Ruminantia</taxon>
        <taxon>Pecora</taxon>
        <taxon>Cervidae</taxon>
        <taxon>Cervinae</taxon>
        <taxon>Cervus</taxon>
    </lineage>
</organism>
<gene>
    <name type="primary">FGF7</name>
    <name type="synonym">KGF</name>
</gene>
<comment type="function">
    <text evidence="1">Plays an important role in the regulation of embryonic development, cell proliferation and cell differentiation. Required for normal branching morphogenesis. Growth factor active on keratinocytes. Possible major paracrine effector of normal epithelial cell proliferation (By similarity).</text>
</comment>
<comment type="subunit">
    <text evidence="1">Interacts with FGFBP1. Interacts with FGFR2. Affinity between fibroblast growth factors (FGFs) and their receptors is increased by heparan sulfate glycosaminoglycans that function as coreceptors (By similarity).</text>
</comment>
<comment type="subcellular location">
    <subcellularLocation>
        <location>Secreted</location>
    </subcellularLocation>
</comment>
<comment type="similarity">
    <text evidence="3">Belongs to the heparin-binding growth factors family.</text>
</comment>
<feature type="signal peptide" evidence="1">
    <location>
        <begin position="1"/>
        <end position="31"/>
    </location>
</feature>
<feature type="chain" id="PRO_0000008964" description="Fibroblast growth factor 7">
    <location>
        <begin position="32"/>
        <end position="194"/>
    </location>
</feature>
<feature type="glycosylation site" description="N-linked (GlcNAc...) asparagine" evidence="2">
    <location>
        <position position="45"/>
    </location>
</feature>
<protein>
    <recommendedName>
        <fullName>Fibroblast growth factor 7</fullName>
        <shortName>FGF-7</shortName>
    </recommendedName>
    <alternativeName>
        <fullName>Heparin-binding growth factor 7</fullName>
        <shortName>HBGF-7</shortName>
    </alternativeName>
    <alternativeName>
        <fullName>Keratinocyte growth factor</fullName>
    </alternativeName>
</protein>
<evidence type="ECO:0000250" key="1"/>
<evidence type="ECO:0000255" key="2"/>
<evidence type="ECO:0000305" key="3"/>